<feature type="chain" id="PRO_0000264934" description="UvrABC system protein C">
    <location>
        <begin position="1"/>
        <end position="727"/>
    </location>
</feature>
<feature type="domain" description="GIY-YIG" evidence="1">
    <location>
        <begin position="16"/>
        <end position="95"/>
    </location>
</feature>
<feature type="domain" description="UVR" evidence="1">
    <location>
        <begin position="208"/>
        <end position="243"/>
    </location>
</feature>
<feature type="region of interest" description="Disordered" evidence="2">
    <location>
        <begin position="503"/>
        <end position="527"/>
    </location>
</feature>
<feature type="region of interest" description="Disordered" evidence="2">
    <location>
        <begin position="679"/>
        <end position="727"/>
    </location>
</feature>
<feature type="compositionally biased region" description="Basic and acidic residues" evidence="2">
    <location>
        <begin position="701"/>
        <end position="711"/>
    </location>
</feature>
<feature type="compositionally biased region" description="Polar residues" evidence="2">
    <location>
        <begin position="718"/>
        <end position="727"/>
    </location>
</feature>
<reference key="1">
    <citation type="journal article" date="2006" name="Proc. Natl. Acad. Sci. U.S.A.">
        <title>The complete genome of Rhodococcus sp. RHA1 provides insights into a catabolic powerhouse.</title>
        <authorList>
            <person name="McLeod M.P."/>
            <person name="Warren R.L."/>
            <person name="Hsiao W.W.L."/>
            <person name="Araki N."/>
            <person name="Myhre M."/>
            <person name="Fernandes C."/>
            <person name="Miyazawa D."/>
            <person name="Wong W."/>
            <person name="Lillquist A.L."/>
            <person name="Wang D."/>
            <person name="Dosanjh M."/>
            <person name="Hara H."/>
            <person name="Petrescu A."/>
            <person name="Morin R.D."/>
            <person name="Yang G."/>
            <person name="Stott J.M."/>
            <person name="Schein J.E."/>
            <person name="Shin H."/>
            <person name="Smailus D."/>
            <person name="Siddiqui A.S."/>
            <person name="Marra M.A."/>
            <person name="Jones S.J.M."/>
            <person name="Holt R."/>
            <person name="Brinkman F.S.L."/>
            <person name="Miyauchi K."/>
            <person name="Fukuda M."/>
            <person name="Davies J.E."/>
            <person name="Mohn W.W."/>
            <person name="Eltis L.D."/>
        </authorList>
    </citation>
    <scope>NUCLEOTIDE SEQUENCE [LARGE SCALE GENOMIC DNA]</scope>
    <source>
        <strain>RHA1</strain>
    </source>
</reference>
<evidence type="ECO:0000255" key="1">
    <source>
        <dbReference type="HAMAP-Rule" id="MF_00203"/>
    </source>
</evidence>
<evidence type="ECO:0000256" key="2">
    <source>
        <dbReference type="SAM" id="MobiDB-lite"/>
    </source>
</evidence>
<dbReference type="EMBL" id="CP000431">
    <property type="protein sequence ID" value="ABG98937.1"/>
    <property type="molecule type" value="Genomic_DNA"/>
</dbReference>
<dbReference type="RefSeq" id="WP_011598874.1">
    <property type="nucleotide sequence ID" value="NC_008268.1"/>
</dbReference>
<dbReference type="SMR" id="Q0S0J9"/>
<dbReference type="KEGG" id="rha:RHA1_ro07173"/>
<dbReference type="PATRIC" id="fig|101510.16.peg.7227"/>
<dbReference type="eggNOG" id="COG0322">
    <property type="taxonomic scope" value="Bacteria"/>
</dbReference>
<dbReference type="HOGENOM" id="CLU_014841_3_2_11"/>
<dbReference type="OrthoDB" id="9804933at2"/>
<dbReference type="Proteomes" id="UP000008710">
    <property type="component" value="Chromosome"/>
</dbReference>
<dbReference type="GO" id="GO:0005737">
    <property type="term" value="C:cytoplasm"/>
    <property type="evidence" value="ECO:0007669"/>
    <property type="project" value="UniProtKB-SubCell"/>
</dbReference>
<dbReference type="GO" id="GO:0009380">
    <property type="term" value="C:excinuclease repair complex"/>
    <property type="evidence" value="ECO:0007669"/>
    <property type="project" value="InterPro"/>
</dbReference>
<dbReference type="GO" id="GO:0003677">
    <property type="term" value="F:DNA binding"/>
    <property type="evidence" value="ECO:0007669"/>
    <property type="project" value="UniProtKB-UniRule"/>
</dbReference>
<dbReference type="GO" id="GO:0009381">
    <property type="term" value="F:excinuclease ABC activity"/>
    <property type="evidence" value="ECO:0007669"/>
    <property type="project" value="UniProtKB-UniRule"/>
</dbReference>
<dbReference type="GO" id="GO:0006289">
    <property type="term" value="P:nucleotide-excision repair"/>
    <property type="evidence" value="ECO:0007669"/>
    <property type="project" value="UniProtKB-UniRule"/>
</dbReference>
<dbReference type="GO" id="GO:0009432">
    <property type="term" value="P:SOS response"/>
    <property type="evidence" value="ECO:0007669"/>
    <property type="project" value="UniProtKB-UniRule"/>
</dbReference>
<dbReference type="CDD" id="cd10434">
    <property type="entry name" value="GIY-YIG_UvrC_Cho"/>
    <property type="match status" value="1"/>
</dbReference>
<dbReference type="FunFam" id="3.40.1440.10:FF:000001">
    <property type="entry name" value="UvrABC system protein C"/>
    <property type="match status" value="1"/>
</dbReference>
<dbReference type="Gene3D" id="1.10.150.20">
    <property type="entry name" value="5' to 3' exonuclease, C-terminal subdomain"/>
    <property type="match status" value="1"/>
</dbReference>
<dbReference type="Gene3D" id="3.40.1440.10">
    <property type="entry name" value="GIY-YIG endonuclease"/>
    <property type="match status" value="1"/>
</dbReference>
<dbReference type="Gene3D" id="4.10.860.10">
    <property type="entry name" value="UVR domain"/>
    <property type="match status" value="1"/>
</dbReference>
<dbReference type="Gene3D" id="3.30.420.340">
    <property type="entry name" value="UvrC, RNAse H endonuclease domain"/>
    <property type="match status" value="1"/>
</dbReference>
<dbReference type="HAMAP" id="MF_00203">
    <property type="entry name" value="UvrC"/>
    <property type="match status" value="1"/>
</dbReference>
<dbReference type="InterPro" id="IPR000305">
    <property type="entry name" value="GIY-YIG_endonuc"/>
</dbReference>
<dbReference type="InterPro" id="IPR035901">
    <property type="entry name" value="GIY-YIG_endonuc_sf"/>
</dbReference>
<dbReference type="InterPro" id="IPR047296">
    <property type="entry name" value="GIY-YIG_UvrC_Cho"/>
</dbReference>
<dbReference type="InterPro" id="IPR003583">
    <property type="entry name" value="Hlx-hairpin-Hlx_DNA-bd_motif"/>
</dbReference>
<dbReference type="InterPro" id="IPR010994">
    <property type="entry name" value="RuvA_2-like"/>
</dbReference>
<dbReference type="InterPro" id="IPR001943">
    <property type="entry name" value="UVR_dom"/>
</dbReference>
<dbReference type="InterPro" id="IPR036876">
    <property type="entry name" value="UVR_dom_sf"/>
</dbReference>
<dbReference type="InterPro" id="IPR050066">
    <property type="entry name" value="UvrABC_protein_C"/>
</dbReference>
<dbReference type="InterPro" id="IPR004791">
    <property type="entry name" value="UvrC"/>
</dbReference>
<dbReference type="InterPro" id="IPR001162">
    <property type="entry name" value="UvrC_RNase_H_dom"/>
</dbReference>
<dbReference type="InterPro" id="IPR038476">
    <property type="entry name" value="UvrC_RNase_H_dom_sf"/>
</dbReference>
<dbReference type="NCBIfam" id="NF001824">
    <property type="entry name" value="PRK00558.1-5"/>
    <property type="match status" value="1"/>
</dbReference>
<dbReference type="NCBIfam" id="TIGR00194">
    <property type="entry name" value="uvrC"/>
    <property type="match status" value="1"/>
</dbReference>
<dbReference type="PANTHER" id="PTHR30562:SF1">
    <property type="entry name" value="UVRABC SYSTEM PROTEIN C"/>
    <property type="match status" value="1"/>
</dbReference>
<dbReference type="PANTHER" id="PTHR30562">
    <property type="entry name" value="UVRC/OXIDOREDUCTASE"/>
    <property type="match status" value="1"/>
</dbReference>
<dbReference type="Pfam" id="PF01541">
    <property type="entry name" value="GIY-YIG"/>
    <property type="match status" value="1"/>
</dbReference>
<dbReference type="Pfam" id="PF14520">
    <property type="entry name" value="HHH_5"/>
    <property type="match status" value="1"/>
</dbReference>
<dbReference type="Pfam" id="PF02151">
    <property type="entry name" value="UVR"/>
    <property type="match status" value="1"/>
</dbReference>
<dbReference type="Pfam" id="PF22920">
    <property type="entry name" value="UvrC_RNaseH"/>
    <property type="match status" value="1"/>
</dbReference>
<dbReference type="Pfam" id="PF08459">
    <property type="entry name" value="UvrC_RNaseH_dom"/>
    <property type="match status" value="1"/>
</dbReference>
<dbReference type="SMART" id="SM00465">
    <property type="entry name" value="GIYc"/>
    <property type="match status" value="1"/>
</dbReference>
<dbReference type="SMART" id="SM00278">
    <property type="entry name" value="HhH1"/>
    <property type="match status" value="2"/>
</dbReference>
<dbReference type="SUPFAM" id="SSF46600">
    <property type="entry name" value="C-terminal UvrC-binding domain of UvrB"/>
    <property type="match status" value="1"/>
</dbReference>
<dbReference type="SUPFAM" id="SSF82771">
    <property type="entry name" value="GIY-YIG endonuclease"/>
    <property type="match status" value="1"/>
</dbReference>
<dbReference type="SUPFAM" id="SSF47781">
    <property type="entry name" value="RuvA domain 2-like"/>
    <property type="match status" value="1"/>
</dbReference>
<dbReference type="PROSITE" id="PS50164">
    <property type="entry name" value="GIY_YIG"/>
    <property type="match status" value="1"/>
</dbReference>
<dbReference type="PROSITE" id="PS50151">
    <property type="entry name" value="UVR"/>
    <property type="match status" value="1"/>
</dbReference>
<dbReference type="PROSITE" id="PS50165">
    <property type="entry name" value="UVRC"/>
    <property type="match status" value="1"/>
</dbReference>
<name>UVRC_RHOJR</name>
<gene>
    <name evidence="1" type="primary">uvrC</name>
    <name type="ordered locus">RHA1_ro07173</name>
</gene>
<accession>Q0S0J9</accession>
<organism>
    <name type="scientific">Rhodococcus jostii (strain RHA1)</name>
    <dbReference type="NCBI Taxonomy" id="101510"/>
    <lineage>
        <taxon>Bacteria</taxon>
        <taxon>Bacillati</taxon>
        <taxon>Actinomycetota</taxon>
        <taxon>Actinomycetes</taxon>
        <taxon>Mycobacteriales</taxon>
        <taxon>Nocardiaceae</taxon>
        <taxon>Rhodococcus</taxon>
    </lineage>
</organism>
<protein>
    <recommendedName>
        <fullName evidence="1">UvrABC system protein C</fullName>
        <shortName evidence="1">Protein UvrC</shortName>
    </recommendedName>
    <alternativeName>
        <fullName evidence="1">Excinuclease ABC subunit C</fullName>
    </alternativeName>
</protein>
<proteinExistence type="inferred from homology"/>
<keyword id="KW-0963">Cytoplasm</keyword>
<keyword id="KW-0227">DNA damage</keyword>
<keyword id="KW-0228">DNA excision</keyword>
<keyword id="KW-0234">DNA repair</keyword>
<keyword id="KW-0267">Excision nuclease</keyword>
<keyword id="KW-0742">SOS response</keyword>
<sequence length="727" mass="79474">MPDPSTYRPATGTIPVDPGVYKFRDPHGRVIYVGKAKSLRSRLNSYFADVSTLHPRTRQMVTTAGSVEWTVVSTEVEALQLEYNWIKEFDPRFNVRYRDDKTYPVLAVTLNEEYPRLFVYRGPRRKGVRYFGPYSHAWAIRETLDLLLRVFPARTCSAGVFKRHNQIGRPCLLGYIDKCSAPCVGRVSAAEHRKIVEDFCDFLSGRTDRLVRQLEARMQEASEELDFETAARLRDDVGALRRALEKQAVVLGDGTDADVAAFATDELEAAVQVFHVRGGRVRGQRGWVVEKAGDVIDWASVDSEAGSDLPLLVEQFLTQFYGEQAALSGATDQEAGTSGVPREVLVPVLPPDAEQVQEWLSGLRGSAVRLRVPQRGDKKALAETVQRNATEALQQHKLRRAGDFTSRSAALQGIQEALDLDSAPLRIECVDISHVQGTDVVASLVVFEDGLPRKSDYRHYAIKEAAGDGRSDDVASIAEVTRRRFLRHNRDVGVLRAEAAGADADQVSGGDGGDLAPEAAIDPQTGRPRRFAYPPNLFVVDGGAPQVAAASAVLDELGITDVAVIGLAKRLEEVWVPGEEDPVILPRTSESLYLLQRVRDEAHRFAITFHRSKRSRRMTASALDSVRGLGETRRKALVTHFGSVARLKQASVEEITAVPGIGTATAKAVLTALGAEEPSADVVGVGDDEPDRNGPGTAERNGADIPREPVEQHGPAAQSASQRTGVE</sequence>
<comment type="function">
    <text evidence="1">The UvrABC repair system catalyzes the recognition and processing of DNA lesions. UvrC both incises the 5' and 3' sides of the lesion. The N-terminal half is responsible for the 3' incision and the C-terminal half is responsible for the 5' incision.</text>
</comment>
<comment type="subunit">
    <text evidence="1">Interacts with UvrB in an incision complex.</text>
</comment>
<comment type="subcellular location">
    <subcellularLocation>
        <location evidence="1">Cytoplasm</location>
    </subcellularLocation>
</comment>
<comment type="similarity">
    <text evidence="1">Belongs to the UvrC family.</text>
</comment>